<feature type="chain" id="PRO_0000339044" description="ATP synthase subunit alpha 1">
    <location>
        <begin position="1"/>
        <end position="517"/>
    </location>
</feature>
<feature type="binding site" evidence="1">
    <location>
        <begin position="174"/>
        <end position="181"/>
    </location>
    <ligand>
        <name>ATP</name>
        <dbReference type="ChEBI" id="CHEBI:30616"/>
    </ligand>
</feature>
<feature type="site" description="Required for activity" evidence="1">
    <location>
        <position position="378"/>
    </location>
</feature>
<accession>A1VIV0</accession>
<dbReference type="EC" id="7.1.2.2" evidence="1"/>
<dbReference type="EMBL" id="CP000529">
    <property type="protein sequence ID" value="ABM35578.1"/>
    <property type="molecule type" value="Genomic_DNA"/>
</dbReference>
<dbReference type="RefSeq" id="WP_011799686.1">
    <property type="nucleotide sequence ID" value="NC_008781.1"/>
</dbReference>
<dbReference type="SMR" id="A1VIV0"/>
<dbReference type="STRING" id="365044.Pnap_0253"/>
<dbReference type="KEGG" id="pna:Pnap_0253"/>
<dbReference type="eggNOG" id="COG0056">
    <property type="taxonomic scope" value="Bacteria"/>
</dbReference>
<dbReference type="HOGENOM" id="CLU_010091_2_1_4"/>
<dbReference type="OrthoDB" id="9803053at2"/>
<dbReference type="Proteomes" id="UP000000644">
    <property type="component" value="Chromosome"/>
</dbReference>
<dbReference type="GO" id="GO:0005886">
    <property type="term" value="C:plasma membrane"/>
    <property type="evidence" value="ECO:0007669"/>
    <property type="project" value="UniProtKB-SubCell"/>
</dbReference>
<dbReference type="GO" id="GO:0045259">
    <property type="term" value="C:proton-transporting ATP synthase complex"/>
    <property type="evidence" value="ECO:0007669"/>
    <property type="project" value="UniProtKB-KW"/>
</dbReference>
<dbReference type="GO" id="GO:0043531">
    <property type="term" value="F:ADP binding"/>
    <property type="evidence" value="ECO:0007669"/>
    <property type="project" value="TreeGrafter"/>
</dbReference>
<dbReference type="GO" id="GO:0005524">
    <property type="term" value="F:ATP binding"/>
    <property type="evidence" value="ECO:0007669"/>
    <property type="project" value="UniProtKB-UniRule"/>
</dbReference>
<dbReference type="GO" id="GO:0046933">
    <property type="term" value="F:proton-transporting ATP synthase activity, rotational mechanism"/>
    <property type="evidence" value="ECO:0007669"/>
    <property type="project" value="UniProtKB-UniRule"/>
</dbReference>
<dbReference type="CDD" id="cd18113">
    <property type="entry name" value="ATP-synt_F1_alpha_C"/>
    <property type="match status" value="1"/>
</dbReference>
<dbReference type="CDD" id="cd18116">
    <property type="entry name" value="ATP-synt_F1_alpha_N"/>
    <property type="match status" value="1"/>
</dbReference>
<dbReference type="CDD" id="cd01132">
    <property type="entry name" value="F1-ATPase_alpha_CD"/>
    <property type="match status" value="1"/>
</dbReference>
<dbReference type="FunFam" id="1.20.150.20:FF:000001">
    <property type="entry name" value="ATP synthase subunit alpha"/>
    <property type="match status" value="1"/>
</dbReference>
<dbReference type="FunFam" id="2.40.30.20:FF:000001">
    <property type="entry name" value="ATP synthase subunit alpha"/>
    <property type="match status" value="1"/>
</dbReference>
<dbReference type="FunFam" id="3.40.50.300:FF:000002">
    <property type="entry name" value="ATP synthase subunit alpha"/>
    <property type="match status" value="1"/>
</dbReference>
<dbReference type="Gene3D" id="2.40.30.20">
    <property type="match status" value="1"/>
</dbReference>
<dbReference type="Gene3D" id="1.20.150.20">
    <property type="entry name" value="ATP synthase alpha/beta chain, C-terminal domain"/>
    <property type="match status" value="1"/>
</dbReference>
<dbReference type="Gene3D" id="3.40.50.300">
    <property type="entry name" value="P-loop containing nucleotide triphosphate hydrolases"/>
    <property type="match status" value="1"/>
</dbReference>
<dbReference type="HAMAP" id="MF_01346">
    <property type="entry name" value="ATP_synth_alpha_bact"/>
    <property type="match status" value="1"/>
</dbReference>
<dbReference type="InterPro" id="IPR023366">
    <property type="entry name" value="ATP_synth_asu-like_sf"/>
</dbReference>
<dbReference type="InterPro" id="IPR000793">
    <property type="entry name" value="ATP_synth_asu_C"/>
</dbReference>
<dbReference type="InterPro" id="IPR038376">
    <property type="entry name" value="ATP_synth_asu_C_sf"/>
</dbReference>
<dbReference type="InterPro" id="IPR033732">
    <property type="entry name" value="ATP_synth_F1_a_nt-bd_dom"/>
</dbReference>
<dbReference type="InterPro" id="IPR005294">
    <property type="entry name" value="ATP_synth_F1_asu"/>
</dbReference>
<dbReference type="InterPro" id="IPR020003">
    <property type="entry name" value="ATPase_a/bsu_AS"/>
</dbReference>
<dbReference type="InterPro" id="IPR004100">
    <property type="entry name" value="ATPase_F1/V1/A1_a/bsu_N"/>
</dbReference>
<dbReference type="InterPro" id="IPR036121">
    <property type="entry name" value="ATPase_F1/V1/A1_a/bsu_N_sf"/>
</dbReference>
<dbReference type="InterPro" id="IPR000194">
    <property type="entry name" value="ATPase_F1/V1/A1_a/bsu_nucl-bd"/>
</dbReference>
<dbReference type="InterPro" id="IPR027417">
    <property type="entry name" value="P-loop_NTPase"/>
</dbReference>
<dbReference type="NCBIfam" id="TIGR00962">
    <property type="entry name" value="atpA"/>
    <property type="match status" value="1"/>
</dbReference>
<dbReference type="NCBIfam" id="NF009884">
    <property type="entry name" value="PRK13343.1"/>
    <property type="match status" value="1"/>
</dbReference>
<dbReference type="PANTHER" id="PTHR48082">
    <property type="entry name" value="ATP SYNTHASE SUBUNIT ALPHA, MITOCHONDRIAL"/>
    <property type="match status" value="1"/>
</dbReference>
<dbReference type="PANTHER" id="PTHR48082:SF2">
    <property type="entry name" value="ATP SYNTHASE SUBUNIT ALPHA, MITOCHONDRIAL"/>
    <property type="match status" value="1"/>
</dbReference>
<dbReference type="Pfam" id="PF00006">
    <property type="entry name" value="ATP-synt_ab"/>
    <property type="match status" value="1"/>
</dbReference>
<dbReference type="Pfam" id="PF00306">
    <property type="entry name" value="ATP-synt_ab_C"/>
    <property type="match status" value="1"/>
</dbReference>
<dbReference type="Pfam" id="PF02874">
    <property type="entry name" value="ATP-synt_ab_N"/>
    <property type="match status" value="1"/>
</dbReference>
<dbReference type="PIRSF" id="PIRSF039088">
    <property type="entry name" value="F_ATPase_subunit_alpha"/>
    <property type="match status" value="1"/>
</dbReference>
<dbReference type="SUPFAM" id="SSF47917">
    <property type="entry name" value="C-terminal domain of alpha and beta subunits of F1 ATP synthase"/>
    <property type="match status" value="1"/>
</dbReference>
<dbReference type="SUPFAM" id="SSF50615">
    <property type="entry name" value="N-terminal domain of alpha and beta subunits of F1 ATP synthase"/>
    <property type="match status" value="1"/>
</dbReference>
<dbReference type="SUPFAM" id="SSF52540">
    <property type="entry name" value="P-loop containing nucleoside triphosphate hydrolases"/>
    <property type="match status" value="1"/>
</dbReference>
<dbReference type="PROSITE" id="PS00152">
    <property type="entry name" value="ATPASE_ALPHA_BETA"/>
    <property type="match status" value="1"/>
</dbReference>
<reference key="1">
    <citation type="journal article" date="2009" name="Environ. Microbiol.">
        <title>The genome of Polaromonas naphthalenivorans strain CJ2, isolated from coal tar-contaminated sediment, reveals physiological and metabolic versatility and evolution through extensive horizontal gene transfer.</title>
        <authorList>
            <person name="Yagi J.M."/>
            <person name="Sims D."/>
            <person name="Brettin T."/>
            <person name="Bruce D."/>
            <person name="Madsen E.L."/>
        </authorList>
    </citation>
    <scope>NUCLEOTIDE SEQUENCE [LARGE SCALE GENOMIC DNA]</scope>
    <source>
        <strain>CJ2</strain>
    </source>
</reference>
<name>ATPA1_POLNA</name>
<proteinExistence type="inferred from homology"/>
<organism>
    <name type="scientific">Polaromonas naphthalenivorans (strain CJ2)</name>
    <dbReference type="NCBI Taxonomy" id="365044"/>
    <lineage>
        <taxon>Bacteria</taxon>
        <taxon>Pseudomonadati</taxon>
        <taxon>Pseudomonadota</taxon>
        <taxon>Betaproteobacteria</taxon>
        <taxon>Burkholderiales</taxon>
        <taxon>Comamonadaceae</taxon>
        <taxon>Polaromonas</taxon>
    </lineage>
</organism>
<sequence>MQLNPAEISELIKSRIEGLAASSDIRNQGTVVSVADGIVRIHGLSDVMQGEMLEFPATADGTPTYGLALNLERDSVGSVILGEYEHIAEGDTVKCTGRILEVPIGPELLGRVVNALGQPIDGKGPINAKLSDVIEKVAPGVIARKSVDQPLQTGLKSIDSMVPIGRGQRELIIGDRQTGKTAVAIDAIINQKGKGVSCVYVAIGQKASSIKNVVRSLEQAGAMDYTIVVAASASESAAMQYVSAYSGCTMGEYFRDRGEDALIVYDDLSKQAVAYRQVSLLLRRPPGREAYPGDVFYLHSRLLERAARVNEKYVEDFTKGAVKGKTGSLTALPIIETQAGDVSAFVPTNVISITDGQIFLETSLFNAGIRPAINAGISVSRVGGAAQTKLIKNLSGGIRTDLAQYRELAAFAQFASDLDEATRKQLDRGARVTELLKQSQYSPLSVSTMGATLFAVNKGFMDDVDVKKVLAFESGLHAWLKDKHAPLMAKLEANKAMDKDAEAELTTAVTAFKKSFA</sequence>
<comment type="function">
    <text evidence="1">Produces ATP from ADP in the presence of a proton gradient across the membrane. The alpha chain is a regulatory subunit.</text>
</comment>
<comment type="catalytic activity">
    <reaction evidence="1">
        <text>ATP + H2O + 4 H(+)(in) = ADP + phosphate + 5 H(+)(out)</text>
        <dbReference type="Rhea" id="RHEA:57720"/>
        <dbReference type="ChEBI" id="CHEBI:15377"/>
        <dbReference type="ChEBI" id="CHEBI:15378"/>
        <dbReference type="ChEBI" id="CHEBI:30616"/>
        <dbReference type="ChEBI" id="CHEBI:43474"/>
        <dbReference type="ChEBI" id="CHEBI:456216"/>
        <dbReference type="EC" id="7.1.2.2"/>
    </reaction>
</comment>
<comment type="subunit">
    <text evidence="1">F-type ATPases have 2 components, CF(1) - the catalytic core - and CF(0) - the membrane proton channel. CF(1) has five subunits: alpha(3), beta(3), gamma(1), delta(1), epsilon(1). CF(0) has three main subunits: a(1), b(2) and c(9-12). The alpha and beta chains form an alternating ring which encloses part of the gamma chain. CF(1) is attached to CF(0) by a central stalk formed by the gamma and epsilon chains, while a peripheral stalk is formed by the delta and b chains.</text>
</comment>
<comment type="subcellular location">
    <subcellularLocation>
        <location evidence="1">Cell inner membrane</location>
        <topology evidence="1">Peripheral membrane protein</topology>
    </subcellularLocation>
</comment>
<comment type="similarity">
    <text evidence="1">Belongs to the ATPase alpha/beta chains family.</text>
</comment>
<evidence type="ECO:0000255" key="1">
    <source>
        <dbReference type="HAMAP-Rule" id="MF_01346"/>
    </source>
</evidence>
<gene>
    <name evidence="1" type="primary">atpA1</name>
    <name type="ordered locus">Pnap_0253</name>
</gene>
<protein>
    <recommendedName>
        <fullName evidence="1">ATP synthase subunit alpha 1</fullName>
        <ecNumber evidence="1">7.1.2.2</ecNumber>
    </recommendedName>
    <alternativeName>
        <fullName evidence="1">ATP synthase F1 sector subunit alpha 1</fullName>
    </alternativeName>
    <alternativeName>
        <fullName evidence="1">F-ATPase subunit alpha 1</fullName>
    </alternativeName>
</protein>
<keyword id="KW-0066">ATP synthesis</keyword>
<keyword id="KW-0067">ATP-binding</keyword>
<keyword id="KW-0997">Cell inner membrane</keyword>
<keyword id="KW-1003">Cell membrane</keyword>
<keyword id="KW-0139">CF(1)</keyword>
<keyword id="KW-0375">Hydrogen ion transport</keyword>
<keyword id="KW-0406">Ion transport</keyword>
<keyword id="KW-0472">Membrane</keyword>
<keyword id="KW-0547">Nucleotide-binding</keyword>
<keyword id="KW-1185">Reference proteome</keyword>
<keyword id="KW-1278">Translocase</keyword>
<keyword id="KW-0813">Transport</keyword>